<feature type="chain" id="PRO_1000063157" description="Imidazole glycerol phosphate synthase subunit HisF">
    <location>
        <begin position="1"/>
        <end position="255"/>
    </location>
</feature>
<feature type="active site" evidence="1">
    <location>
        <position position="12"/>
    </location>
</feature>
<feature type="active site" evidence="1">
    <location>
        <position position="131"/>
    </location>
</feature>
<protein>
    <recommendedName>
        <fullName evidence="1">Imidazole glycerol phosphate synthase subunit HisF</fullName>
        <ecNumber evidence="1">4.3.2.10</ecNumber>
    </recommendedName>
    <alternativeName>
        <fullName evidence="1">IGP synthase cyclase subunit</fullName>
    </alternativeName>
    <alternativeName>
        <fullName evidence="1">IGP synthase subunit HisF</fullName>
    </alternativeName>
    <alternativeName>
        <fullName evidence="1">ImGP synthase subunit HisF</fullName>
        <shortName evidence="1">IGPS subunit HisF</shortName>
    </alternativeName>
</protein>
<accession>Q1GNC3</accession>
<proteinExistence type="inferred from homology"/>
<gene>
    <name evidence="1" type="primary">hisF</name>
    <name type="ordered locus">Sala_3146</name>
</gene>
<dbReference type="EC" id="4.3.2.10" evidence="1"/>
<dbReference type="EMBL" id="CP000356">
    <property type="protein sequence ID" value="ABF54849.1"/>
    <property type="molecule type" value="Genomic_DNA"/>
</dbReference>
<dbReference type="RefSeq" id="WP_011543411.1">
    <property type="nucleotide sequence ID" value="NC_008048.1"/>
</dbReference>
<dbReference type="SMR" id="Q1GNC3"/>
<dbReference type="STRING" id="317655.Sala_3146"/>
<dbReference type="KEGG" id="sal:Sala_3146"/>
<dbReference type="eggNOG" id="COG0107">
    <property type="taxonomic scope" value="Bacteria"/>
</dbReference>
<dbReference type="HOGENOM" id="CLU_048577_4_0_5"/>
<dbReference type="OrthoDB" id="9781903at2"/>
<dbReference type="UniPathway" id="UPA00031">
    <property type="reaction ID" value="UER00010"/>
</dbReference>
<dbReference type="Proteomes" id="UP000006578">
    <property type="component" value="Chromosome"/>
</dbReference>
<dbReference type="GO" id="GO:0005737">
    <property type="term" value="C:cytoplasm"/>
    <property type="evidence" value="ECO:0007669"/>
    <property type="project" value="UniProtKB-SubCell"/>
</dbReference>
<dbReference type="GO" id="GO:0000107">
    <property type="term" value="F:imidazoleglycerol-phosphate synthase activity"/>
    <property type="evidence" value="ECO:0007669"/>
    <property type="project" value="UniProtKB-UniRule"/>
</dbReference>
<dbReference type="GO" id="GO:0016829">
    <property type="term" value="F:lyase activity"/>
    <property type="evidence" value="ECO:0007669"/>
    <property type="project" value="UniProtKB-KW"/>
</dbReference>
<dbReference type="GO" id="GO:0000105">
    <property type="term" value="P:L-histidine biosynthetic process"/>
    <property type="evidence" value="ECO:0007669"/>
    <property type="project" value="UniProtKB-UniRule"/>
</dbReference>
<dbReference type="CDD" id="cd04731">
    <property type="entry name" value="HisF"/>
    <property type="match status" value="1"/>
</dbReference>
<dbReference type="FunFam" id="3.20.20.70:FF:000006">
    <property type="entry name" value="Imidazole glycerol phosphate synthase subunit HisF"/>
    <property type="match status" value="1"/>
</dbReference>
<dbReference type="Gene3D" id="3.20.20.70">
    <property type="entry name" value="Aldolase class I"/>
    <property type="match status" value="1"/>
</dbReference>
<dbReference type="HAMAP" id="MF_01013">
    <property type="entry name" value="HisF"/>
    <property type="match status" value="1"/>
</dbReference>
<dbReference type="InterPro" id="IPR013785">
    <property type="entry name" value="Aldolase_TIM"/>
</dbReference>
<dbReference type="InterPro" id="IPR006062">
    <property type="entry name" value="His_biosynth"/>
</dbReference>
<dbReference type="InterPro" id="IPR004651">
    <property type="entry name" value="HisF"/>
</dbReference>
<dbReference type="InterPro" id="IPR050064">
    <property type="entry name" value="IGPS_HisA/HisF"/>
</dbReference>
<dbReference type="InterPro" id="IPR011060">
    <property type="entry name" value="RibuloseP-bd_barrel"/>
</dbReference>
<dbReference type="NCBIfam" id="TIGR00735">
    <property type="entry name" value="hisF"/>
    <property type="match status" value="1"/>
</dbReference>
<dbReference type="PANTHER" id="PTHR21235:SF2">
    <property type="entry name" value="IMIDAZOLE GLYCEROL PHOSPHATE SYNTHASE HISHF"/>
    <property type="match status" value="1"/>
</dbReference>
<dbReference type="PANTHER" id="PTHR21235">
    <property type="entry name" value="IMIDAZOLE GLYCEROL PHOSPHATE SYNTHASE SUBUNIT HISF/H IGP SYNTHASE SUBUNIT HISF/H"/>
    <property type="match status" value="1"/>
</dbReference>
<dbReference type="Pfam" id="PF00977">
    <property type="entry name" value="His_biosynth"/>
    <property type="match status" value="1"/>
</dbReference>
<dbReference type="SUPFAM" id="SSF51366">
    <property type="entry name" value="Ribulose-phoshate binding barrel"/>
    <property type="match status" value="1"/>
</dbReference>
<reference key="1">
    <citation type="journal article" date="2009" name="Proc. Natl. Acad. Sci. U.S.A.">
        <title>The genomic basis of trophic strategy in marine bacteria.</title>
        <authorList>
            <person name="Lauro F.M."/>
            <person name="McDougald D."/>
            <person name="Thomas T."/>
            <person name="Williams T.J."/>
            <person name="Egan S."/>
            <person name="Rice S."/>
            <person name="DeMaere M.Z."/>
            <person name="Ting L."/>
            <person name="Ertan H."/>
            <person name="Johnson J."/>
            <person name="Ferriera S."/>
            <person name="Lapidus A."/>
            <person name="Anderson I."/>
            <person name="Kyrpides N."/>
            <person name="Munk A.C."/>
            <person name="Detter C."/>
            <person name="Han C.S."/>
            <person name="Brown M.V."/>
            <person name="Robb F.T."/>
            <person name="Kjelleberg S."/>
            <person name="Cavicchioli R."/>
        </authorList>
    </citation>
    <scope>NUCLEOTIDE SEQUENCE [LARGE SCALE GENOMIC DNA]</scope>
    <source>
        <strain>DSM 13593 / LMG 18877 / RB2256</strain>
    </source>
</reference>
<name>HIS6_SPHAL</name>
<comment type="function">
    <text evidence="1">IGPS catalyzes the conversion of PRFAR and glutamine to IGP, AICAR and glutamate. The HisF subunit catalyzes the cyclization activity that produces IGP and AICAR from PRFAR using the ammonia provided by the HisH subunit.</text>
</comment>
<comment type="catalytic activity">
    <reaction evidence="1">
        <text>5-[(5-phospho-1-deoxy-D-ribulos-1-ylimino)methylamino]-1-(5-phospho-beta-D-ribosyl)imidazole-4-carboxamide + L-glutamine = D-erythro-1-(imidazol-4-yl)glycerol 3-phosphate + 5-amino-1-(5-phospho-beta-D-ribosyl)imidazole-4-carboxamide + L-glutamate + H(+)</text>
        <dbReference type="Rhea" id="RHEA:24793"/>
        <dbReference type="ChEBI" id="CHEBI:15378"/>
        <dbReference type="ChEBI" id="CHEBI:29985"/>
        <dbReference type="ChEBI" id="CHEBI:58278"/>
        <dbReference type="ChEBI" id="CHEBI:58359"/>
        <dbReference type="ChEBI" id="CHEBI:58475"/>
        <dbReference type="ChEBI" id="CHEBI:58525"/>
        <dbReference type="EC" id="4.3.2.10"/>
    </reaction>
</comment>
<comment type="pathway">
    <text evidence="1">Amino-acid biosynthesis; L-histidine biosynthesis; L-histidine from 5-phospho-alpha-D-ribose 1-diphosphate: step 5/9.</text>
</comment>
<comment type="subunit">
    <text evidence="1">Heterodimer of HisH and HisF.</text>
</comment>
<comment type="subcellular location">
    <subcellularLocation>
        <location evidence="1">Cytoplasm</location>
    </subcellularLocation>
</comment>
<comment type="similarity">
    <text evidence="1">Belongs to the HisA/HisF family.</text>
</comment>
<evidence type="ECO:0000255" key="1">
    <source>
        <dbReference type="HAMAP-Rule" id="MF_01013"/>
    </source>
</evidence>
<organism>
    <name type="scientific">Sphingopyxis alaskensis (strain DSM 13593 / LMG 18877 / RB2256)</name>
    <name type="common">Sphingomonas alaskensis</name>
    <dbReference type="NCBI Taxonomy" id="317655"/>
    <lineage>
        <taxon>Bacteria</taxon>
        <taxon>Pseudomonadati</taxon>
        <taxon>Pseudomonadota</taxon>
        <taxon>Alphaproteobacteria</taxon>
        <taxon>Sphingomonadales</taxon>
        <taxon>Sphingomonadaceae</taxon>
        <taxon>Sphingopyxis</taxon>
    </lineage>
</organism>
<sequence>MTVRVRVIPCLDVADGRVVKGVNFVDLRDAGDPVEAARAYDAAGADELCFLDISASHQGRGTLLDLVSRTAEVCFMPLTVGGGVRSAEDARALLLAGADKVAVNSAAVARPELVADIADRFGSQCAVGSIDARRVEDGRWEIFTHGGRKPTGIDAVEHAVRLATLGAGELLVTSMDRDGTRDGYDLALTRAIADAVSVPVIASGGVGNLDHLVAGVIEGGASAVLAASIFHFGEATIAEAHARLAAAGLPVRSPI</sequence>
<keyword id="KW-0028">Amino-acid biosynthesis</keyword>
<keyword id="KW-0963">Cytoplasm</keyword>
<keyword id="KW-0368">Histidine biosynthesis</keyword>
<keyword id="KW-0456">Lyase</keyword>
<keyword id="KW-1185">Reference proteome</keyword>